<organism>
    <name type="scientific">Escherichia coli O8 (strain IAI1)</name>
    <dbReference type="NCBI Taxonomy" id="585034"/>
    <lineage>
        <taxon>Bacteria</taxon>
        <taxon>Pseudomonadati</taxon>
        <taxon>Pseudomonadota</taxon>
        <taxon>Gammaproteobacteria</taxon>
        <taxon>Enterobacterales</taxon>
        <taxon>Enterobacteriaceae</taxon>
        <taxon>Escherichia</taxon>
    </lineage>
</organism>
<feature type="chain" id="PRO_1000119992" description="UPF0145 protein YbjQ">
    <location>
        <begin position="1"/>
        <end position="107"/>
    </location>
</feature>
<reference key="1">
    <citation type="journal article" date="2009" name="PLoS Genet.">
        <title>Organised genome dynamics in the Escherichia coli species results in highly diverse adaptive paths.</title>
        <authorList>
            <person name="Touchon M."/>
            <person name="Hoede C."/>
            <person name="Tenaillon O."/>
            <person name="Barbe V."/>
            <person name="Baeriswyl S."/>
            <person name="Bidet P."/>
            <person name="Bingen E."/>
            <person name="Bonacorsi S."/>
            <person name="Bouchier C."/>
            <person name="Bouvet O."/>
            <person name="Calteau A."/>
            <person name="Chiapello H."/>
            <person name="Clermont O."/>
            <person name="Cruveiller S."/>
            <person name="Danchin A."/>
            <person name="Diard M."/>
            <person name="Dossat C."/>
            <person name="Karoui M.E."/>
            <person name="Frapy E."/>
            <person name="Garry L."/>
            <person name="Ghigo J.M."/>
            <person name="Gilles A.M."/>
            <person name="Johnson J."/>
            <person name="Le Bouguenec C."/>
            <person name="Lescat M."/>
            <person name="Mangenot S."/>
            <person name="Martinez-Jehanne V."/>
            <person name="Matic I."/>
            <person name="Nassif X."/>
            <person name="Oztas S."/>
            <person name="Petit M.A."/>
            <person name="Pichon C."/>
            <person name="Rouy Z."/>
            <person name="Ruf C.S."/>
            <person name="Schneider D."/>
            <person name="Tourret J."/>
            <person name="Vacherie B."/>
            <person name="Vallenet D."/>
            <person name="Medigue C."/>
            <person name="Rocha E.P.C."/>
            <person name="Denamur E."/>
        </authorList>
    </citation>
    <scope>NUCLEOTIDE SEQUENCE [LARGE SCALE GENOMIC DNA]</scope>
    <source>
        <strain>IAI1</strain>
    </source>
</reference>
<comment type="similarity">
    <text evidence="1">Belongs to the UPF0145 family.</text>
</comment>
<accession>B7M7E1</accession>
<sequence length="107" mass="11437">MQFSTTPTLEGQTIVEYCGVVTGEAILGANIFRDFFAGIRDIVGGRSGAYEKELRKAREIAFEELGSQARALGADAVVGIDIDYETVGQNGSMLMVSVSGTAVKTRR</sequence>
<name>YBJQ_ECO8A</name>
<dbReference type="EMBL" id="CU928160">
    <property type="protein sequence ID" value="CAQ97770.1"/>
    <property type="molecule type" value="Genomic_DNA"/>
</dbReference>
<dbReference type="RefSeq" id="WP_001160737.1">
    <property type="nucleotide sequence ID" value="NC_011741.1"/>
</dbReference>
<dbReference type="SMR" id="B7M7E1"/>
<dbReference type="KEGG" id="ecr:ECIAI1_0906"/>
<dbReference type="HOGENOM" id="CLU_117144_3_0_6"/>
<dbReference type="Gene3D" id="3.30.110.70">
    <property type="entry name" value="Hypothetical protein apc22750. Chain B"/>
    <property type="match status" value="1"/>
</dbReference>
<dbReference type="HAMAP" id="MF_00338">
    <property type="entry name" value="UPF0145"/>
    <property type="match status" value="1"/>
</dbReference>
<dbReference type="InterPro" id="IPR035439">
    <property type="entry name" value="UPF0145_dom_sf"/>
</dbReference>
<dbReference type="InterPro" id="IPR002765">
    <property type="entry name" value="UPF0145_YbjQ-like"/>
</dbReference>
<dbReference type="NCBIfam" id="NF002776">
    <property type="entry name" value="PRK02877.1"/>
    <property type="match status" value="1"/>
</dbReference>
<dbReference type="PANTHER" id="PTHR34068">
    <property type="entry name" value="UPF0145 PROTEIN YBJQ"/>
    <property type="match status" value="1"/>
</dbReference>
<dbReference type="PANTHER" id="PTHR34068:SF1">
    <property type="entry name" value="UPF0145 PROTEIN YBJQ"/>
    <property type="match status" value="1"/>
</dbReference>
<dbReference type="Pfam" id="PF01906">
    <property type="entry name" value="YbjQ_1"/>
    <property type="match status" value="1"/>
</dbReference>
<dbReference type="SUPFAM" id="SSF117782">
    <property type="entry name" value="YbjQ-like"/>
    <property type="match status" value="1"/>
</dbReference>
<gene>
    <name evidence="1" type="primary">ybjQ</name>
    <name type="ordered locus">ECIAI1_0906</name>
</gene>
<proteinExistence type="inferred from homology"/>
<protein>
    <recommendedName>
        <fullName evidence="1">UPF0145 protein YbjQ</fullName>
    </recommendedName>
</protein>
<evidence type="ECO:0000255" key="1">
    <source>
        <dbReference type="HAMAP-Rule" id="MF_00338"/>
    </source>
</evidence>